<gene>
    <name evidence="1" type="primary">deoC</name>
    <name type="ordered locus">jk1923</name>
</gene>
<dbReference type="EC" id="4.1.2.4" evidence="1"/>
<dbReference type="EMBL" id="CR931997">
    <property type="protein sequence ID" value="CAI38104.1"/>
    <property type="molecule type" value="Genomic_DNA"/>
</dbReference>
<dbReference type="RefSeq" id="WP_005292177.1">
    <property type="nucleotide sequence ID" value="NC_007164.1"/>
</dbReference>
<dbReference type="SMR" id="Q4JSV3"/>
<dbReference type="STRING" id="306537.jk1923"/>
<dbReference type="GeneID" id="92739552"/>
<dbReference type="KEGG" id="cjk:jk1923"/>
<dbReference type="eggNOG" id="COG0274">
    <property type="taxonomic scope" value="Bacteria"/>
</dbReference>
<dbReference type="HOGENOM" id="CLU_053595_0_0_11"/>
<dbReference type="OrthoDB" id="6579831at2"/>
<dbReference type="UniPathway" id="UPA00002">
    <property type="reaction ID" value="UER00468"/>
</dbReference>
<dbReference type="Proteomes" id="UP000000545">
    <property type="component" value="Chromosome"/>
</dbReference>
<dbReference type="GO" id="GO:0005737">
    <property type="term" value="C:cytoplasm"/>
    <property type="evidence" value="ECO:0007669"/>
    <property type="project" value="UniProtKB-SubCell"/>
</dbReference>
<dbReference type="GO" id="GO:0004139">
    <property type="term" value="F:deoxyribose-phosphate aldolase activity"/>
    <property type="evidence" value="ECO:0007669"/>
    <property type="project" value="UniProtKB-UniRule"/>
</dbReference>
<dbReference type="GO" id="GO:0006018">
    <property type="term" value="P:2-deoxyribose 1-phosphate catabolic process"/>
    <property type="evidence" value="ECO:0007669"/>
    <property type="project" value="UniProtKB-UniRule"/>
</dbReference>
<dbReference type="GO" id="GO:0016052">
    <property type="term" value="P:carbohydrate catabolic process"/>
    <property type="evidence" value="ECO:0007669"/>
    <property type="project" value="TreeGrafter"/>
</dbReference>
<dbReference type="GO" id="GO:0009264">
    <property type="term" value="P:deoxyribonucleotide catabolic process"/>
    <property type="evidence" value="ECO:0007669"/>
    <property type="project" value="InterPro"/>
</dbReference>
<dbReference type="CDD" id="cd00959">
    <property type="entry name" value="DeoC"/>
    <property type="match status" value="1"/>
</dbReference>
<dbReference type="Gene3D" id="3.20.20.70">
    <property type="entry name" value="Aldolase class I"/>
    <property type="match status" value="1"/>
</dbReference>
<dbReference type="HAMAP" id="MF_00114">
    <property type="entry name" value="DeoC_type1"/>
    <property type="match status" value="1"/>
</dbReference>
<dbReference type="InterPro" id="IPR013785">
    <property type="entry name" value="Aldolase_TIM"/>
</dbReference>
<dbReference type="InterPro" id="IPR011343">
    <property type="entry name" value="DeoC"/>
</dbReference>
<dbReference type="InterPro" id="IPR002915">
    <property type="entry name" value="DeoC/FbaB/LacD_aldolase"/>
</dbReference>
<dbReference type="InterPro" id="IPR028581">
    <property type="entry name" value="DeoC_typeI"/>
</dbReference>
<dbReference type="NCBIfam" id="TIGR00126">
    <property type="entry name" value="deoC"/>
    <property type="match status" value="1"/>
</dbReference>
<dbReference type="PANTHER" id="PTHR10889">
    <property type="entry name" value="DEOXYRIBOSE-PHOSPHATE ALDOLASE"/>
    <property type="match status" value="1"/>
</dbReference>
<dbReference type="PANTHER" id="PTHR10889:SF1">
    <property type="entry name" value="DEOXYRIBOSE-PHOSPHATE ALDOLASE"/>
    <property type="match status" value="1"/>
</dbReference>
<dbReference type="Pfam" id="PF01791">
    <property type="entry name" value="DeoC"/>
    <property type="match status" value="1"/>
</dbReference>
<dbReference type="PIRSF" id="PIRSF001357">
    <property type="entry name" value="DeoC"/>
    <property type="match status" value="1"/>
</dbReference>
<dbReference type="SMART" id="SM01133">
    <property type="entry name" value="DeoC"/>
    <property type="match status" value="1"/>
</dbReference>
<dbReference type="SUPFAM" id="SSF51569">
    <property type="entry name" value="Aldolase"/>
    <property type="match status" value="1"/>
</dbReference>
<evidence type="ECO:0000255" key="1">
    <source>
        <dbReference type="HAMAP-Rule" id="MF_00114"/>
    </source>
</evidence>
<organism>
    <name type="scientific">Corynebacterium jeikeium (strain K411)</name>
    <dbReference type="NCBI Taxonomy" id="306537"/>
    <lineage>
        <taxon>Bacteria</taxon>
        <taxon>Bacillati</taxon>
        <taxon>Actinomycetota</taxon>
        <taxon>Actinomycetes</taxon>
        <taxon>Mycobacteriales</taxon>
        <taxon>Corynebacteriaceae</taxon>
        <taxon>Corynebacterium</taxon>
    </lineage>
</organism>
<reference key="1">
    <citation type="journal article" date="2005" name="J. Bacteriol.">
        <title>Complete genome sequence and analysis of the multiresistant nosocomial pathogen Corynebacterium jeikeium K411, a lipid-requiring bacterium of the human skin flora.</title>
        <authorList>
            <person name="Tauch A."/>
            <person name="Kaiser O."/>
            <person name="Hain T."/>
            <person name="Goesmann A."/>
            <person name="Weisshaar B."/>
            <person name="Albersmeier A."/>
            <person name="Bekel T."/>
            <person name="Bischoff N."/>
            <person name="Brune I."/>
            <person name="Chakraborty T."/>
            <person name="Kalinowski J."/>
            <person name="Meyer F."/>
            <person name="Rupp O."/>
            <person name="Schneiker S."/>
            <person name="Viehoever P."/>
            <person name="Puehler A."/>
        </authorList>
    </citation>
    <scope>NUCLEOTIDE SEQUENCE [LARGE SCALE GENOMIC DNA]</scope>
    <source>
        <strain>K411</strain>
    </source>
</reference>
<sequence>MTHFDRSKVTREAVAAILDATLLKPEASRDDVAALVREATELGCGAVCVSPSMLPLGSVPPSGSLGTDATLRIATVAGFPSGKHASLVKATEARYAAQLGADEIDVVIDVAAALAKDQNALLAELITVREAVPHPLVLKVIVESALLDEEQLRTAVRACVQAGADYVKTSTGFHPAGGASVEAVSIMADELRKLGKLAPFGMGEEERVAAGLVGIKASGGIRDWDAALDMIEAGATRLGVSAAAKVLGA</sequence>
<protein>
    <recommendedName>
        <fullName evidence="1">Deoxyribose-phosphate aldolase</fullName>
        <shortName evidence="1">DERA</shortName>
        <ecNumber evidence="1">4.1.2.4</ecNumber>
    </recommendedName>
    <alternativeName>
        <fullName evidence="1">2-deoxy-D-ribose 5-phosphate aldolase</fullName>
    </alternativeName>
    <alternativeName>
        <fullName evidence="1">Phosphodeoxyriboaldolase</fullName>
        <shortName evidence="1">Deoxyriboaldolase</shortName>
    </alternativeName>
</protein>
<feature type="chain" id="PRO_0000231538" description="Deoxyribose-phosphate aldolase">
    <location>
        <begin position="1"/>
        <end position="249"/>
    </location>
</feature>
<feature type="active site" description="Proton donor/acceptor" evidence="1">
    <location>
        <position position="105"/>
    </location>
</feature>
<feature type="active site" description="Schiff-base intermediate with acetaldehyde" evidence="1">
    <location>
        <position position="168"/>
    </location>
</feature>
<feature type="active site" description="Proton donor/acceptor" evidence="1">
    <location>
        <position position="216"/>
    </location>
</feature>
<comment type="function">
    <text evidence="1">Catalyzes a reversible aldol reaction between acetaldehyde and D-glyceraldehyde 3-phosphate to generate 2-deoxy-D-ribose 5-phosphate.</text>
</comment>
<comment type="catalytic activity">
    <reaction evidence="1">
        <text>2-deoxy-D-ribose 5-phosphate = D-glyceraldehyde 3-phosphate + acetaldehyde</text>
        <dbReference type="Rhea" id="RHEA:12821"/>
        <dbReference type="ChEBI" id="CHEBI:15343"/>
        <dbReference type="ChEBI" id="CHEBI:59776"/>
        <dbReference type="ChEBI" id="CHEBI:62877"/>
        <dbReference type="EC" id="4.1.2.4"/>
    </reaction>
</comment>
<comment type="pathway">
    <text evidence="1">Carbohydrate degradation; 2-deoxy-D-ribose 1-phosphate degradation; D-glyceraldehyde 3-phosphate and acetaldehyde from 2-deoxy-alpha-D-ribose 1-phosphate: step 2/2.</text>
</comment>
<comment type="subcellular location">
    <subcellularLocation>
        <location evidence="1">Cytoplasm</location>
    </subcellularLocation>
</comment>
<comment type="similarity">
    <text evidence="1">Belongs to the DeoC/FbaB aldolase family. DeoC type 1 subfamily.</text>
</comment>
<proteinExistence type="inferred from homology"/>
<name>DEOC_CORJK</name>
<accession>Q4JSV3</accession>
<keyword id="KW-0963">Cytoplasm</keyword>
<keyword id="KW-0456">Lyase</keyword>
<keyword id="KW-1185">Reference proteome</keyword>
<keyword id="KW-0704">Schiff base</keyword>